<comment type="function">
    <text evidence="1">Component of the SOS system and an inhibitor of cell division. Accumulation of SulA causes rapid cessation of cell division and the appearance of long, non-septate filaments. In the presence of GTP, binds a polymerization-competent form of FtsZ in a 1:1 ratio, thus inhibiting FtsZ polymerization and therefore preventing it from participating in the assembly of the Z ring. This mechanism prevents the premature segregation of damaged DNA to daughter cells during cell division.</text>
</comment>
<comment type="subunit">
    <text evidence="1">Interacts with FtsZ.</text>
</comment>
<comment type="induction">
    <text evidence="1">By DNA damage, as part of the SOS response.</text>
</comment>
<comment type="PTM">
    <text evidence="1">Is rapidly cleaved and degraded by the Lon protease once DNA damage is repaired.</text>
</comment>
<comment type="similarity">
    <text evidence="1">Belongs to the SulA family.</text>
</comment>
<organism>
    <name type="scientific">Yersinia pestis</name>
    <dbReference type="NCBI Taxonomy" id="632"/>
    <lineage>
        <taxon>Bacteria</taxon>
        <taxon>Pseudomonadati</taxon>
        <taxon>Pseudomonadota</taxon>
        <taxon>Gammaproteobacteria</taxon>
        <taxon>Enterobacterales</taxon>
        <taxon>Yersiniaceae</taxon>
        <taxon>Yersinia</taxon>
    </lineage>
</organism>
<feature type="chain" id="PRO_0000343980" description="Cell division inhibitor SulA">
    <location>
        <begin position="1"/>
        <end position="168"/>
    </location>
</feature>
<feature type="region of interest" description="FtsZ binding" evidence="1">
    <location>
        <begin position="106"/>
        <end position="112"/>
    </location>
</feature>
<feature type="region of interest" description="Lon protease binding" evidence="1">
    <location>
        <begin position="161"/>
        <end position="168"/>
    </location>
</feature>
<feature type="site" description="Essential for degradation by Lon protease" evidence="1">
    <location>
        <position position="168"/>
    </location>
</feature>
<name>SULA_YERPE</name>
<dbReference type="EMBL" id="AE009952">
    <property type="protein sequence ID" value="AAM86286.1"/>
    <property type="molecule type" value="Genomic_DNA"/>
</dbReference>
<dbReference type="EMBL" id="AE017042">
    <property type="protein sequence ID" value="AAS61570.1"/>
    <property type="molecule type" value="Genomic_DNA"/>
</dbReference>
<dbReference type="EMBL" id="AL590842">
    <property type="protein sequence ID" value="CAL20087.1"/>
    <property type="molecule type" value="Genomic_DNA"/>
</dbReference>
<dbReference type="PIR" id="AE0175">
    <property type="entry name" value="AE0175"/>
</dbReference>
<dbReference type="RefSeq" id="WP_002213065.1">
    <property type="nucleotide sequence ID" value="NZ_WUCM01000066.1"/>
</dbReference>
<dbReference type="RefSeq" id="YP_002346457.1">
    <property type="nucleotide sequence ID" value="NC_003143.1"/>
</dbReference>
<dbReference type="SMR" id="Q7CHL5"/>
<dbReference type="STRING" id="214092.YPO1436"/>
<dbReference type="PaxDb" id="214092-YPO1436"/>
<dbReference type="DNASU" id="1147681"/>
<dbReference type="EnsemblBacteria" id="AAS61570">
    <property type="protein sequence ID" value="AAS61570"/>
    <property type="gene ID" value="YP_1327"/>
</dbReference>
<dbReference type="GeneID" id="57977127"/>
<dbReference type="KEGG" id="ype:YPO1436"/>
<dbReference type="KEGG" id="ypk:y2734"/>
<dbReference type="KEGG" id="ypm:YP_1327"/>
<dbReference type="PATRIC" id="fig|214092.21.peg.1762"/>
<dbReference type="eggNOG" id="COG5404">
    <property type="taxonomic scope" value="Bacteria"/>
</dbReference>
<dbReference type="HOGENOM" id="CLU_118972_1_0_6"/>
<dbReference type="OMA" id="YGFIMRP"/>
<dbReference type="OrthoDB" id="6464784at2"/>
<dbReference type="Proteomes" id="UP000000815">
    <property type="component" value="Chromosome"/>
</dbReference>
<dbReference type="Proteomes" id="UP000001019">
    <property type="component" value="Chromosome"/>
</dbReference>
<dbReference type="Proteomes" id="UP000002490">
    <property type="component" value="Chromosome"/>
</dbReference>
<dbReference type="GO" id="GO:0000917">
    <property type="term" value="P:division septum assembly"/>
    <property type="evidence" value="ECO:0007669"/>
    <property type="project" value="UniProtKB-KW"/>
</dbReference>
<dbReference type="GO" id="GO:0006281">
    <property type="term" value="P:DNA repair"/>
    <property type="evidence" value="ECO:0000318"/>
    <property type="project" value="GO_Central"/>
</dbReference>
<dbReference type="GO" id="GO:0051782">
    <property type="term" value="P:negative regulation of cell division"/>
    <property type="evidence" value="ECO:0007669"/>
    <property type="project" value="UniProtKB-UniRule"/>
</dbReference>
<dbReference type="GO" id="GO:0009432">
    <property type="term" value="P:SOS response"/>
    <property type="evidence" value="ECO:0007669"/>
    <property type="project" value="UniProtKB-UniRule"/>
</dbReference>
<dbReference type="FunFam" id="3.40.50.300:FF:000417">
    <property type="entry name" value="Cell division inhibitor SulA"/>
    <property type="match status" value="1"/>
</dbReference>
<dbReference type="Gene3D" id="3.40.50.300">
    <property type="entry name" value="P-loop containing nucleotide triphosphate hydrolases"/>
    <property type="match status" value="1"/>
</dbReference>
<dbReference type="HAMAP" id="MF_01179">
    <property type="entry name" value="SulA"/>
    <property type="match status" value="1"/>
</dbReference>
<dbReference type="InterPro" id="IPR004596">
    <property type="entry name" value="Cell_div_suppressor_SulA"/>
</dbReference>
<dbReference type="InterPro" id="IPR027417">
    <property type="entry name" value="P-loop_NTPase"/>
</dbReference>
<dbReference type="InterPro" id="IPR050356">
    <property type="entry name" value="SulA_CellDiv_inhibitor"/>
</dbReference>
<dbReference type="InterPro" id="IPR047696">
    <property type="entry name" value="SulA_enterobact"/>
</dbReference>
<dbReference type="NCBIfam" id="NF007892">
    <property type="entry name" value="PRK10595.1"/>
    <property type="match status" value="1"/>
</dbReference>
<dbReference type="NCBIfam" id="TIGR00623">
    <property type="entry name" value="SOS_SulA_coli"/>
    <property type="match status" value="1"/>
</dbReference>
<dbReference type="PANTHER" id="PTHR35369">
    <property type="entry name" value="BLR3025 PROTEIN-RELATED"/>
    <property type="match status" value="1"/>
</dbReference>
<dbReference type="PANTHER" id="PTHR35369:SF4">
    <property type="entry name" value="CELL DIVISION INHIBITOR SULA"/>
    <property type="match status" value="1"/>
</dbReference>
<dbReference type="Pfam" id="PF03846">
    <property type="entry name" value="SulA"/>
    <property type="match status" value="1"/>
</dbReference>
<dbReference type="PIRSF" id="PIRSF003093">
    <property type="entry name" value="SulA"/>
    <property type="match status" value="1"/>
</dbReference>
<dbReference type="SUPFAM" id="SSF52540">
    <property type="entry name" value="P-loop containing nucleoside triphosphate hydrolases"/>
    <property type="match status" value="1"/>
</dbReference>
<reference key="1">
    <citation type="journal article" date="2002" name="J. Bacteriol.">
        <title>Genome sequence of Yersinia pestis KIM.</title>
        <authorList>
            <person name="Deng W."/>
            <person name="Burland V."/>
            <person name="Plunkett G. III"/>
            <person name="Boutin A."/>
            <person name="Mayhew G.F."/>
            <person name="Liss P."/>
            <person name="Perna N.T."/>
            <person name="Rose D.J."/>
            <person name="Mau B."/>
            <person name="Zhou S."/>
            <person name="Schwartz D.C."/>
            <person name="Fetherston J.D."/>
            <person name="Lindler L.E."/>
            <person name="Brubaker R.R."/>
            <person name="Plano G.V."/>
            <person name="Straley S.C."/>
            <person name="McDonough K.A."/>
            <person name="Nilles M.L."/>
            <person name="Matson J.S."/>
            <person name="Blattner F.R."/>
            <person name="Perry R.D."/>
        </authorList>
    </citation>
    <scope>NUCLEOTIDE SEQUENCE [LARGE SCALE GENOMIC DNA]</scope>
    <source>
        <strain>KIM10+ / Biovar Mediaevalis</strain>
    </source>
</reference>
<reference key="2">
    <citation type="journal article" date="2001" name="Nature">
        <title>Genome sequence of Yersinia pestis, the causative agent of plague.</title>
        <authorList>
            <person name="Parkhill J."/>
            <person name="Wren B.W."/>
            <person name="Thomson N.R."/>
            <person name="Titball R.W."/>
            <person name="Holden M.T.G."/>
            <person name="Prentice M.B."/>
            <person name="Sebaihia M."/>
            <person name="James K.D."/>
            <person name="Churcher C.M."/>
            <person name="Mungall K.L."/>
            <person name="Baker S."/>
            <person name="Basham D."/>
            <person name="Bentley S.D."/>
            <person name="Brooks K."/>
            <person name="Cerdeno-Tarraga A.-M."/>
            <person name="Chillingworth T."/>
            <person name="Cronin A."/>
            <person name="Davies R.M."/>
            <person name="Davis P."/>
            <person name="Dougan G."/>
            <person name="Feltwell T."/>
            <person name="Hamlin N."/>
            <person name="Holroyd S."/>
            <person name="Jagels K."/>
            <person name="Karlyshev A.V."/>
            <person name="Leather S."/>
            <person name="Moule S."/>
            <person name="Oyston P.C.F."/>
            <person name="Quail M.A."/>
            <person name="Rutherford K.M."/>
            <person name="Simmonds M."/>
            <person name="Skelton J."/>
            <person name="Stevens K."/>
            <person name="Whitehead S."/>
            <person name="Barrell B.G."/>
        </authorList>
    </citation>
    <scope>NUCLEOTIDE SEQUENCE [LARGE SCALE GENOMIC DNA]</scope>
    <source>
        <strain>CO-92 / Biovar Orientalis</strain>
    </source>
</reference>
<reference key="3">
    <citation type="journal article" date="2004" name="DNA Res.">
        <title>Complete genome sequence of Yersinia pestis strain 91001, an isolate avirulent to humans.</title>
        <authorList>
            <person name="Song Y."/>
            <person name="Tong Z."/>
            <person name="Wang J."/>
            <person name="Wang L."/>
            <person name="Guo Z."/>
            <person name="Han Y."/>
            <person name="Zhang J."/>
            <person name="Pei D."/>
            <person name="Zhou D."/>
            <person name="Qin H."/>
            <person name="Pang X."/>
            <person name="Han Y."/>
            <person name="Zhai J."/>
            <person name="Li M."/>
            <person name="Cui B."/>
            <person name="Qi Z."/>
            <person name="Jin L."/>
            <person name="Dai R."/>
            <person name="Chen F."/>
            <person name="Li S."/>
            <person name="Ye C."/>
            <person name="Du Z."/>
            <person name="Lin W."/>
            <person name="Wang J."/>
            <person name="Yu J."/>
            <person name="Yang H."/>
            <person name="Wang J."/>
            <person name="Huang P."/>
            <person name="Yang R."/>
        </authorList>
    </citation>
    <scope>NUCLEOTIDE SEQUENCE [LARGE SCALE GENOMIC DNA]</scope>
    <source>
        <strain>91001 / Biovar Mediaevalis</strain>
    </source>
</reference>
<proteinExistence type="inferred from homology"/>
<protein>
    <recommendedName>
        <fullName evidence="1">Cell division inhibitor SulA</fullName>
    </recommendedName>
</protein>
<sequence length="168" mass="19060">MRTQSLKPYHANYHSLTTNDSPTRVDAPTDSGLISEFVYSENQPVVTQLLLPLLQQLSKQSRWLLWLTPQQKLSRSWLKQSGLPINKVVQLRQINPLSTVEAMEKALLTGNYSVVLGWLPELTEDDRIRLRLAAKLGNAYGFVMRPLNDTKVGSGQCATLKIHSYLYH</sequence>
<evidence type="ECO:0000255" key="1">
    <source>
        <dbReference type="HAMAP-Rule" id="MF_01179"/>
    </source>
</evidence>
<accession>Q7CHL5</accession>
<accession>Q74VI1</accession>
<keyword id="KW-0131">Cell cycle</keyword>
<keyword id="KW-0132">Cell division</keyword>
<keyword id="KW-0227">DNA damage</keyword>
<keyword id="KW-1185">Reference proteome</keyword>
<keyword id="KW-0717">Septation</keyword>
<keyword id="KW-0742">SOS response</keyword>
<gene>
    <name evidence="1" type="primary">sulA</name>
    <name type="ordered locus">YPO1436</name>
    <name type="ordered locus">y2734</name>
    <name type="ordered locus">YP_1327</name>
</gene>